<gene>
    <name evidence="1" type="primary">lexA</name>
    <name type="ordered locus">NT01EI_0237</name>
</gene>
<comment type="function">
    <text evidence="1">Represses a number of genes involved in the response to DNA damage (SOS response), including recA and lexA. Binds to the 16 bp palindromic sequence 5'-CTGTATATATATACAG-3'. In the presence of single-stranded DNA, RecA interacts with LexA causing an autocatalytic cleavage which disrupts the DNA-binding part of LexA, leading to derepression of the SOS regulon and eventually DNA repair.</text>
</comment>
<comment type="catalytic activity">
    <reaction evidence="1">
        <text>Hydrolysis of Ala-|-Gly bond in repressor LexA.</text>
        <dbReference type="EC" id="3.4.21.88"/>
    </reaction>
</comment>
<comment type="subunit">
    <text evidence="1">Homodimer.</text>
</comment>
<comment type="similarity">
    <text evidence="1">Belongs to the peptidase S24 family.</text>
</comment>
<organism>
    <name type="scientific">Edwardsiella ictaluri (strain 93-146)</name>
    <dbReference type="NCBI Taxonomy" id="634503"/>
    <lineage>
        <taxon>Bacteria</taxon>
        <taxon>Pseudomonadati</taxon>
        <taxon>Pseudomonadota</taxon>
        <taxon>Gammaproteobacteria</taxon>
        <taxon>Enterobacterales</taxon>
        <taxon>Hafniaceae</taxon>
        <taxon>Edwardsiella</taxon>
    </lineage>
</organism>
<protein>
    <recommendedName>
        <fullName evidence="1">LexA repressor</fullName>
        <ecNumber evidence="1">3.4.21.88</ecNumber>
    </recommendedName>
</protein>
<reference key="1">
    <citation type="submission" date="2009-03" db="EMBL/GenBank/DDBJ databases">
        <title>Complete genome sequence of Edwardsiella ictaluri 93-146.</title>
        <authorList>
            <person name="Williams M.L."/>
            <person name="Gillaspy A.F."/>
            <person name="Dyer D.W."/>
            <person name="Thune R.L."/>
            <person name="Waldbieser G.C."/>
            <person name="Schuster S.C."/>
            <person name="Gipson J."/>
            <person name="Zaitshik J."/>
            <person name="Landry C."/>
            <person name="Lawrence M.L."/>
        </authorList>
    </citation>
    <scope>NUCLEOTIDE SEQUENCE [LARGE SCALE GENOMIC DNA]</scope>
    <source>
        <strain>93-146</strain>
    </source>
</reference>
<name>LEXA_EDWI9</name>
<feature type="chain" id="PRO_1000201820" description="LexA repressor">
    <location>
        <begin position="1"/>
        <end position="202"/>
    </location>
</feature>
<feature type="DNA-binding region" description="H-T-H motif" evidence="1">
    <location>
        <begin position="28"/>
        <end position="48"/>
    </location>
</feature>
<feature type="active site" description="For autocatalytic cleavage activity" evidence="1">
    <location>
        <position position="119"/>
    </location>
</feature>
<feature type="active site" description="For autocatalytic cleavage activity" evidence="1">
    <location>
        <position position="156"/>
    </location>
</feature>
<feature type="site" description="Cleavage; by autolysis" evidence="1">
    <location>
        <begin position="84"/>
        <end position="85"/>
    </location>
</feature>
<dbReference type="EC" id="3.4.21.88" evidence="1"/>
<dbReference type="EMBL" id="CP001600">
    <property type="protein sequence ID" value="ACR67480.1"/>
    <property type="molecule type" value="Genomic_DNA"/>
</dbReference>
<dbReference type="RefSeq" id="WP_015869689.1">
    <property type="nucleotide sequence ID" value="NZ_CP169062.1"/>
</dbReference>
<dbReference type="SMR" id="C5B718"/>
<dbReference type="STRING" id="67780.B6E78_12305"/>
<dbReference type="MEROPS" id="S24.001"/>
<dbReference type="GeneID" id="69537337"/>
<dbReference type="KEGG" id="eic:NT01EI_0237"/>
<dbReference type="PATRIC" id="fig|634503.3.peg.213"/>
<dbReference type="HOGENOM" id="CLU_066192_45_3_6"/>
<dbReference type="OrthoDB" id="9802364at2"/>
<dbReference type="Proteomes" id="UP000001485">
    <property type="component" value="Chromosome"/>
</dbReference>
<dbReference type="GO" id="GO:0003677">
    <property type="term" value="F:DNA binding"/>
    <property type="evidence" value="ECO:0007669"/>
    <property type="project" value="UniProtKB-UniRule"/>
</dbReference>
<dbReference type="GO" id="GO:0004252">
    <property type="term" value="F:serine-type endopeptidase activity"/>
    <property type="evidence" value="ECO:0007669"/>
    <property type="project" value="UniProtKB-UniRule"/>
</dbReference>
<dbReference type="GO" id="GO:0006281">
    <property type="term" value="P:DNA repair"/>
    <property type="evidence" value="ECO:0007669"/>
    <property type="project" value="UniProtKB-UniRule"/>
</dbReference>
<dbReference type="GO" id="GO:0006260">
    <property type="term" value="P:DNA replication"/>
    <property type="evidence" value="ECO:0007669"/>
    <property type="project" value="UniProtKB-UniRule"/>
</dbReference>
<dbReference type="GO" id="GO:0045892">
    <property type="term" value="P:negative regulation of DNA-templated transcription"/>
    <property type="evidence" value="ECO:0007669"/>
    <property type="project" value="UniProtKB-UniRule"/>
</dbReference>
<dbReference type="GO" id="GO:0006508">
    <property type="term" value="P:proteolysis"/>
    <property type="evidence" value="ECO:0007669"/>
    <property type="project" value="InterPro"/>
</dbReference>
<dbReference type="GO" id="GO:0009432">
    <property type="term" value="P:SOS response"/>
    <property type="evidence" value="ECO:0007669"/>
    <property type="project" value="UniProtKB-UniRule"/>
</dbReference>
<dbReference type="CDD" id="cd06529">
    <property type="entry name" value="S24_LexA-like"/>
    <property type="match status" value="1"/>
</dbReference>
<dbReference type="FunFam" id="1.10.10.10:FF:000009">
    <property type="entry name" value="LexA repressor"/>
    <property type="match status" value="1"/>
</dbReference>
<dbReference type="FunFam" id="2.10.109.10:FF:000001">
    <property type="entry name" value="LexA repressor"/>
    <property type="match status" value="1"/>
</dbReference>
<dbReference type="Gene3D" id="2.10.109.10">
    <property type="entry name" value="Umud Fragment, subunit A"/>
    <property type="match status" value="1"/>
</dbReference>
<dbReference type="Gene3D" id="1.10.10.10">
    <property type="entry name" value="Winged helix-like DNA-binding domain superfamily/Winged helix DNA-binding domain"/>
    <property type="match status" value="1"/>
</dbReference>
<dbReference type="HAMAP" id="MF_00015">
    <property type="entry name" value="LexA"/>
    <property type="match status" value="1"/>
</dbReference>
<dbReference type="InterPro" id="IPR006200">
    <property type="entry name" value="LexA"/>
</dbReference>
<dbReference type="InterPro" id="IPR039418">
    <property type="entry name" value="LexA-like"/>
</dbReference>
<dbReference type="InterPro" id="IPR036286">
    <property type="entry name" value="LexA/Signal_pep-like_sf"/>
</dbReference>
<dbReference type="InterPro" id="IPR006199">
    <property type="entry name" value="LexA_DNA-bd_dom"/>
</dbReference>
<dbReference type="InterPro" id="IPR050077">
    <property type="entry name" value="LexA_repressor"/>
</dbReference>
<dbReference type="InterPro" id="IPR006197">
    <property type="entry name" value="Peptidase_S24_LexA"/>
</dbReference>
<dbReference type="InterPro" id="IPR015927">
    <property type="entry name" value="Peptidase_S24_S26A/B/C"/>
</dbReference>
<dbReference type="InterPro" id="IPR036388">
    <property type="entry name" value="WH-like_DNA-bd_sf"/>
</dbReference>
<dbReference type="InterPro" id="IPR036390">
    <property type="entry name" value="WH_DNA-bd_sf"/>
</dbReference>
<dbReference type="NCBIfam" id="TIGR00498">
    <property type="entry name" value="lexA"/>
    <property type="match status" value="1"/>
</dbReference>
<dbReference type="PANTHER" id="PTHR33516">
    <property type="entry name" value="LEXA REPRESSOR"/>
    <property type="match status" value="1"/>
</dbReference>
<dbReference type="PANTHER" id="PTHR33516:SF2">
    <property type="entry name" value="LEXA REPRESSOR-RELATED"/>
    <property type="match status" value="1"/>
</dbReference>
<dbReference type="Pfam" id="PF01726">
    <property type="entry name" value="LexA_DNA_bind"/>
    <property type="match status" value="1"/>
</dbReference>
<dbReference type="Pfam" id="PF00717">
    <property type="entry name" value="Peptidase_S24"/>
    <property type="match status" value="1"/>
</dbReference>
<dbReference type="PRINTS" id="PR00726">
    <property type="entry name" value="LEXASERPTASE"/>
</dbReference>
<dbReference type="SUPFAM" id="SSF51306">
    <property type="entry name" value="LexA/Signal peptidase"/>
    <property type="match status" value="1"/>
</dbReference>
<dbReference type="SUPFAM" id="SSF46785">
    <property type="entry name" value="Winged helix' DNA-binding domain"/>
    <property type="match status" value="1"/>
</dbReference>
<keyword id="KW-0068">Autocatalytic cleavage</keyword>
<keyword id="KW-0227">DNA damage</keyword>
<keyword id="KW-0234">DNA repair</keyword>
<keyword id="KW-0235">DNA replication</keyword>
<keyword id="KW-0238">DNA-binding</keyword>
<keyword id="KW-0378">Hydrolase</keyword>
<keyword id="KW-0678">Repressor</keyword>
<keyword id="KW-0742">SOS response</keyword>
<keyword id="KW-0804">Transcription</keyword>
<keyword id="KW-0805">Transcription regulation</keyword>
<sequence>MKALTARQQQVYDLIRDHIEQTGMPPTRAEIAQRLGFRSPNAAEEHLKALQRKGVIEIVSGASRGIRLLMEDETGLPLVGQVAAGEPLLAQQHIEGFYQIDPSLFKPGADFLLRVNGMSMRDIGILDGDLLAVHKTQDVRNGQVVVARIEDEVTVKRLKKQGNMVQLLPENCDFQPIVVDLREQSFTIEGLAVGVIRNGDWI</sequence>
<accession>C5B718</accession>
<evidence type="ECO:0000255" key="1">
    <source>
        <dbReference type="HAMAP-Rule" id="MF_00015"/>
    </source>
</evidence>
<proteinExistence type="inferred from homology"/>